<proteinExistence type="evidence at protein level"/>
<sequence length="572" mass="63693">MRTSQYLLSTLKETPADAEVISHQLMLRAGMIRKLASGLYTWLPTGVRVLKKVENIVREEMNNAGAIEVSMPVVQPADLWQESGRWEQYGPELLRFVDRGERPFVLGPTHEEVITDLIRNELSSYKQLPLNFYQIQTKFRDEVRPRFGVMRSREFLMKDAYSFHTSQESLQETYDAMYAAYSKIFSRMGLDFRAVQADTGSIGGSASHEFQVLAQSGEDDVVFSDTSDYAANIELAEAIAPKEPRAAATQEMTLVDTPNAKTIAELVEQFNLPIEKTVKTLLVKAVEGSSFPQVALLVRGDHELNEVKAEKLPQVASPLTFATEEEIRAVVKAGPGSLGPVNMPIPVVIDRTVAAMSDFAAGANIDGKHYFGINWDRDVATPEVADIRNVVAGDPSPDGQGRLLIKRGIEVGHIFQLGTKYSEALKASVQGEDGRNQILTMGCYGIGVTRVVAAAIEQNYDERGIVWPDAIAPFQVAILPMNMHKSFRVQELAEKLYSELRAQGIEVLLDDRKERPGVMFADMELIGIPHTIVLGDRNLDNDDIEYKYRRNGEKQLIKTGDIVEYLVKQIKG</sequence>
<comment type="function">
    <text>Catalyzes the attachment of proline to tRNA(Pro) in a two-step reaction: proline is first activated by ATP to form Pro-AMP and then transferred to the acceptor end of tRNA(Pro). As ProRS can inadvertently accommodate and process non-cognate amino acids such as alanine and cysteine, to avoid such errors it has two additional distinct editing activities against alanine. One activity is designated as 'pretransfer' editing and involves the tRNA(Pro)-independent hydrolysis of activated Ala-AMP. The other activity is designated 'posttransfer' editing and involves deacylation of mischarged Ala-tRNA(Pro). Misacylated Cys-tRNA(Pro) is not edited by ProRS, but instead may be edited in trans by YbaK.</text>
</comment>
<comment type="catalytic activity">
    <reaction>
        <text>tRNA(Pro) + L-proline + ATP = L-prolyl-tRNA(Pro) + AMP + diphosphate</text>
        <dbReference type="Rhea" id="RHEA:14305"/>
        <dbReference type="Rhea" id="RHEA-COMP:9700"/>
        <dbReference type="Rhea" id="RHEA-COMP:9702"/>
        <dbReference type="ChEBI" id="CHEBI:30616"/>
        <dbReference type="ChEBI" id="CHEBI:33019"/>
        <dbReference type="ChEBI" id="CHEBI:60039"/>
        <dbReference type="ChEBI" id="CHEBI:78442"/>
        <dbReference type="ChEBI" id="CHEBI:78532"/>
        <dbReference type="ChEBI" id="CHEBI:456215"/>
        <dbReference type="EC" id="6.1.1.15"/>
    </reaction>
</comment>
<comment type="biophysicochemical properties">
    <kinetics>
        <KM evidence="1 2 4">0.25 mM for proline</KM>
        <KM evidence="1 2 4">140 mM for alanine</KM>
        <KM evidence="1 2 4">0.17 mM for cysteine</KM>
    </kinetics>
</comment>
<comment type="subunit">
    <text>Homodimer.</text>
</comment>
<comment type="subcellular location">
    <subcellularLocation>
        <location>Cytoplasm</location>
    </subcellularLocation>
</comment>
<comment type="domain">
    <text>Consists of three domains: the N-terminal catalytic domain, the editing domain and the C-terminal anticodon-binding domain.</text>
</comment>
<comment type="similarity">
    <text evidence="5">Belongs to the class-II aminoacyl-tRNA synthetase family. ProS type 1 subfamily.</text>
</comment>
<evidence type="ECO:0000269" key="1">
    <source>
    </source>
</evidence>
<evidence type="ECO:0000269" key="2">
    <source>
    </source>
</evidence>
<evidence type="ECO:0000269" key="3">
    <source>
    </source>
</evidence>
<evidence type="ECO:0000269" key="4">
    <source>
    </source>
</evidence>
<evidence type="ECO:0000305" key="5"/>
<organism>
    <name type="scientific">Escherichia coli (strain K12)</name>
    <dbReference type="NCBI Taxonomy" id="83333"/>
    <lineage>
        <taxon>Bacteria</taxon>
        <taxon>Pseudomonadati</taxon>
        <taxon>Pseudomonadota</taxon>
        <taxon>Gammaproteobacteria</taxon>
        <taxon>Enterobacterales</taxon>
        <taxon>Enterobacteriaceae</taxon>
        <taxon>Escherichia</taxon>
    </lineage>
</organism>
<accession>P16659</accession>
<accession>P78272</accession>
<accession>Q59430</accession>
<reference key="1">
    <citation type="journal article" date="1990" name="Nature">
        <title>Partition of tRNA synthetases into two classes based on mutually exclusive sets of sequence motifs.</title>
        <authorList>
            <person name="Eriani G."/>
            <person name="Delarue M."/>
            <person name="Poch O."/>
            <person name="Gangloff J."/>
            <person name="Moras D."/>
        </authorList>
    </citation>
    <scope>NUCLEOTIDE SEQUENCE [GENOMIC DNA]</scope>
    <scope>PROTEIN SEQUENCE OF 1-12</scope>
</reference>
<reference key="2">
    <citation type="journal article" date="1990" name="J. Bacteriol.">
        <title>Identification and sequence of the drpA gene from Escherichia coli.</title>
        <authorList>
            <person name="Zhou Z."/>
            <person name="Syvanen M."/>
        </authorList>
    </citation>
    <scope>NUCLEOTIDE SEQUENCE [GENOMIC DNA]</scope>
</reference>
<reference key="3">
    <citation type="submission" date="1996-02" db="EMBL/GenBank/DDBJ databases">
        <title>Systematic sequencing of the Escherichia coli genome: analysis of the 4.0 - 6.0 min (189,987 - 281,416bp) region.</title>
        <authorList>
            <person name="Takemoto K."/>
            <person name="Mori H."/>
            <person name="Murayama N."/>
            <person name="Kataoka K."/>
            <person name="Yano M."/>
            <person name="Itoh T."/>
            <person name="Yamamoto Y."/>
            <person name="Inokuchi H."/>
            <person name="Miki T."/>
            <person name="Hatada E."/>
            <person name="Fukuda R."/>
            <person name="Ichihara S."/>
            <person name="Mizuno T."/>
            <person name="Makino K."/>
            <person name="Nakata A."/>
            <person name="Yura T."/>
            <person name="Sampei G."/>
            <person name="Mizobuchi K."/>
        </authorList>
    </citation>
    <scope>NUCLEOTIDE SEQUENCE [LARGE SCALE GENOMIC DNA]</scope>
    <source>
        <strain>K12 / W3110 / ATCC 27325 / DSM 5911</strain>
    </source>
</reference>
<reference key="4">
    <citation type="submission" date="1997-01" db="EMBL/GenBank/DDBJ databases">
        <title>Sequence of minutes 4-25 of Escherichia coli.</title>
        <authorList>
            <person name="Chung E."/>
            <person name="Allen E."/>
            <person name="Araujo R."/>
            <person name="Aparicio A.M."/>
            <person name="Davis K."/>
            <person name="Duncan M."/>
            <person name="Federspiel N."/>
            <person name="Hyman R."/>
            <person name="Kalman S."/>
            <person name="Komp C."/>
            <person name="Kurdi O."/>
            <person name="Lew H."/>
            <person name="Lin D."/>
            <person name="Namath A."/>
            <person name="Oefner P."/>
            <person name="Roberts D."/>
            <person name="Schramm S."/>
            <person name="Davis R.W."/>
        </authorList>
    </citation>
    <scope>NUCLEOTIDE SEQUENCE [LARGE SCALE GENOMIC DNA]</scope>
    <source>
        <strain>K12 / MG1655 / ATCC 47076</strain>
    </source>
</reference>
<reference key="5">
    <citation type="journal article" date="1997" name="Science">
        <title>The complete genome sequence of Escherichia coli K-12.</title>
        <authorList>
            <person name="Blattner F.R."/>
            <person name="Plunkett G. III"/>
            <person name="Bloch C.A."/>
            <person name="Perna N.T."/>
            <person name="Burland V."/>
            <person name="Riley M."/>
            <person name="Collado-Vides J."/>
            <person name="Glasner J.D."/>
            <person name="Rode C.K."/>
            <person name="Mayhew G.F."/>
            <person name="Gregor J."/>
            <person name="Davis N.W."/>
            <person name="Kirkpatrick H.A."/>
            <person name="Goeden M.A."/>
            <person name="Rose D.J."/>
            <person name="Mau B."/>
            <person name="Shao Y."/>
        </authorList>
    </citation>
    <scope>NUCLEOTIDE SEQUENCE [LARGE SCALE GENOMIC DNA]</scope>
    <source>
        <strain>K12 / MG1655 / ATCC 47076</strain>
    </source>
</reference>
<reference key="6">
    <citation type="journal article" date="2006" name="Mol. Syst. Biol.">
        <title>Highly accurate genome sequences of Escherichia coli K-12 strains MG1655 and W3110.</title>
        <authorList>
            <person name="Hayashi K."/>
            <person name="Morooka N."/>
            <person name="Yamamoto Y."/>
            <person name="Fujita K."/>
            <person name="Isono K."/>
            <person name="Choi S."/>
            <person name="Ohtsubo E."/>
            <person name="Baba T."/>
            <person name="Wanner B.L."/>
            <person name="Mori H."/>
            <person name="Horiuchi T."/>
        </authorList>
    </citation>
    <scope>NUCLEOTIDE SEQUENCE [LARGE SCALE GENOMIC DNA]</scope>
    <scope>SEQUENCE REVISION TO 26-27; 205 AND 568-572</scope>
    <source>
        <strain>K12 / W3110 / ATCC 27325 / DSM 5911</strain>
    </source>
</reference>
<reference key="7">
    <citation type="submission" date="1993-04" db="EMBL/GenBank/DDBJ databases">
        <authorList>
            <person name="Miyamoto K."/>
        </authorList>
    </citation>
    <scope>NUCLEOTIDE SEQUENCE [GENOMIC DNA] OF 1-155</scope>
    <source>
        <strain>K12</strain>
    </source>
</reference>
<reference key="8">
    <citation type="journal article" date="1997" name="Electrophoresis">
        <title>Comparing the predicted and observed properties of proteins encoded in the genome of Escherichia coli K-12.</title>
        <authorList>
            <person name="Link A.J."/>
            <person name="Robison K."/>
            <person name="Church G.M."/>
        </authorList>
    </citation>
    <scope>PROTEIN SEQUENCE OF 1-12</scope>
    <source>
        <strain>K12 / EMG2</strain>
    </source>
</reference>
<reference key="9">
    <citation type="journal article" date="2000" name="Proc. Natl. Acad. Sci. U.S.A.">
        <title>Hydrolytic editing by a class II aminoacyl-tRNA synthetase.</title>
        <authorList>
            <person name="Beuning P.J."/>
            <person name="Musier-Forsyth K."/>
        </authorList>
    </citation>
    <scope>EDITING ACTIVITY</scope>
    <scope>KINETIC PARAMETERS</scope>
    <scope>MUTAGENESIS OF CYS-443</scope>
</reference>
<reference key="10">
    <citation type="journal article" date="2001" name="J. Biol. Chem.">
        <title>Species-specific differences in amino acid editing by class II prolyl-tRNA synthetase.</title>
        <authorList>
            <person name="Beuning P.J."/>
            <person name="Musier-Forsyth K."/>
        </authorList>
    </citation>
    <scope>EDITING ACTIVITY</scope>
    <scope>KINETIC PARAMETERS</scope>
</reference>
<reference key="11">
    <citation type="journal article" date="2002" name="Biochemistry">
        <title>Functional role of the prokaryotic proline-tRNA synthetase insertion domain in amino acid editing.</title>
        <authorList>
            <person name="Wong F.-C."/>
            <person name="Beuning P.J."/>
            <person name="Nagan M."/>
            <person name="Shiba K."/>
            <person name="Musier-Forsyth K."/>
        </authorList>
    </citation>
    <scope>MUTAGENESIS OF THR-257; LYS-279; ASP-350; HIS-369; ASP-378; ASP-386 AND ASP-394</scope>
</reference>
<reference key="12">
    <citation type="journal article" date="2002" name="J. Biol. Chem.">
        <title>Cysteine activation is an inherent in vitro property of prolyl-tRNA synthetases.</title>
        <authorList>
            <person name="Ahel I."/>
            <person name="Stathopoulos C."/>
            <person name="Ambrogelly A."/>
            <person name="Sauerwald A."/>
            <person name="Toogood H."/>
            <person name="Hartsch T."/>
            <person name="Soell D."/>
        </authorList>
    </citation>
    <scope>PROLINE AND CYSTEINE ACTIVATION</scope>
    <scope>EDITING ACTIVITY</scope>
    <scope>KINETIC PARAMETERS</scope>
</reference>
<reference key="13">
    <citation type="journal article" date="2003" name="J. Biol. Chem.">
        <title>An isolated class II aminoacyl-tRNA synthetase insertion domain is functional in amino acid editing.</title>
        <authorList>
            <person name="Wong F.-C."/>
            <person name="Beuning P.J."/>
            <person name="Silvers C."/>
            <person name="Musier-Forsyth K."/>
        </authorList>
    </citation>
    <scope>EDITING DOMAIN</scope>
</reference>
<name>SYP_ECOLI</name>
<gene>
    <name type="primary">proS</name>
    <name type="synonym">drpA</name>
    <name type="ordered locus">b0194</name>
    <name type="ordered locus">JW0190</name>
</gene>
<feature type="chain" id="PRO_0000139329" description="Proline--tRNA ligase">
    <location>
        <begin position="1"/>
        <end position="572"/>
    </location>
</feature>
<feature type="mutagenesis site" description="Reduces the posttransfer editing activity 5-fold, with little change in both the aminoacylation and the pretransfer editing activities." evidence="3">
    <original>T</original>
    <variation>A</variation>
    <location>
        <position position="257"/>
    </location>
</feature>
<feature type="mutagenesis site" description="Severely affects the posttransfer editing activity, with little change in both the aminoacylation and the pretransfer editing activities." evidence="3">
    <original>K</original>
    <variation>A</variation>
    <location>
        <position position="279"/>
    </location>
</feature>
<feature type="mutagenesis site" description="Abolishes the pretransfer editing activity and reduces the aminoacylation activity 20-fold and the posttransfer editing activity 5-fold." evidence="3">
    <original>D</original>
    <variation>A</variation>
    <location>
        <position position="350"/>
    </location>
</feature>
<feature type="mutagenesis site" description="Reduces both the aminoacylation and the pretransfer editing activities 2.5-fold, and the posttransfer editing activity 5-fold. Loss of specificity in deacylation." evidence="3">
    <original>H</original>
    <variation>A</variation>
    <location>
        <position position="369"/>
    </location>
</feature>
<feature type="mutagenesis site" description="Little change in both the aminoacylation and the editing activities." evidence="3">
    <original>D</original>
    <variation>A</variation>
    <location>
        <position position="378"/>
    </location>
</feature>
<feature type="mutagenesis site" description="Reduces the posttransfer editing activity approximately 2-fold, with little change in both the aminoacylation and the pretransfer editing activities." evidence="3">
    <original>D</original>
    <variation>A</variation>
    <location>
        <position position="386"/>
    </location>
</feature>
<feature type="mutagenesis site" description="Reduces the posttransfer editing activity approximately 2-fold, with little change in both the aminoacylation and the pretransfer editing activities." evidence="3">
    <original>D</original>
    <variation>A</variation>
    <location>
        <position position="394"/>
    </location>
</feature>
<feature type="mutagenesis site" description="150-fold decrease in posttransfer editing activity against alanine, without change neither in pretransfer editing nor in aminoacylation." evidence="1">
    <original>C</original>
    <variation>G</variation>
    <location>
        <position position="443"/>
    </location>
</feature>
<feature type="sequence conflict" description="In Ref. 1." evidence="5" ref="1">
    <original>ML</original>
    <variation>IV</variation>
    <location>
        <begin position="26"/>
        <end position="27"/>
    </location>
</feature>
<feature type="sequence conflict" description="In Ref. 2; AAA23710." evidence="5" ref="2">
    <original>QL</original>
    <variation>HV</variation>
    <location>
        <begin position="127"/>
        <end position="128"/>
    </location>
</feature>
<feature type="sequence conflict" description="In Ref. 2; AAA23710." evidence="5" ref="2">
    <original>SASHEFQVLAQS</original>
    <variation>RPLTNSRCWRR</variation>
    <location>
        <begin position="205"/>
        <end position="216"/>
    </location>
</feature>
<feature type="sequence conflict" description="In Ref. 1." evidence="5" ref="1">
    <original>S</original>
    <variation>Q</variation>
    <location>
        <position position="205"/>
    </location>
</feature>
<feature type="sequence conflict" description="In Ref. 2." evidence="5" ref="2">
    <original>PG</original>
    <variation>RA</variation>
    <location>
        <begin position="516"/>
        <end position="517"/>
    </location>
</feature>
<feature type="sequence conflict" description="In Ref. 2." evidence="5" ref="2">
    <location>
        <begin position="518"/>
        <end position="572"/>
    </location>
</feature>
<dbReference type="EC" id="6.1.1.15"/>
<dbReference type="EMBL" id="X55518">
    <property type="protein sequence ID" value="CAA39134.1"/>
    <property type="molecule type" value="Genomic_DNA"/>
</dbReference>
<dbReference type="EMBL" id="M97858">
    <property type="protein sequence ID" value="AAA24420.1"/>
    <property type="molecule type" value="Genomic_DNA"/>
</dbReference>
<dbReference type="EMBL" id="M32357">
    <property type="protein sequence ID" value="AAA23710.1"/>
    <property type="molecule type" value="Genomic_DNA"/>
</dbReference>
<dbReference type="EMBL" id="U70214">
    <property type="protein sequence ID" value="AAB08622.1"/>
    <property type="molecule type" value="Genomic_DNA"/>
</dbReference>
<dbReference type="EMBL" id="U00096">
    <property type="protein sequence ID" value="AAC73305.1"/>
    <property type="molecule type" value="Genomic_DNA"/>
</dbReference>
<dbReference type="EMBL" id="AP009048">
    <property type="protein sequence ID" value="BAA77870.2"/>
    <property type="molecule type" value="Genomic_DNA"/>
</dbReference>
<dbReference type="EMBL" id="D15061">
    <property type="protein sequence ID" value="BAA03654.1"/>
    <property type="molecule type" value="Genomic_DNA"/>
</dbReference>
<dbReference type="PIR" id="B64744">
    <property type="entry name" value="YPEC"/>
</dbReference>
<dbReference type="RefSeq" id="NP_414736.1">
    <property type="nucleotide sequence ID" value="NC_000913.3"/>
</dbReference>
<dbReference type="RefSeq" id="WP_001260717.1">
    <property type="nucleotide sequence ID" value="NZ_LN832404.1"/>
</dbReference>
<dbReference type="SMR" id="P16659"/>
<dbReference type="BioGRID" id="4261629">
    <property type="interactions" value="40"/>
</dbReference>
<dbReference type="DIP" id="DIP-10573N"/>
<dbReference type="FunCoup" id="P16659">
    <property type="interactions" value="790"/>
</dbReference>
<dbReference type="IntAct" id="P16659">
    <property type="interactions" value="20"/>
</dbReference>
<dbReference type="STRING" id="511145.b0194"/>
<dbReference type="BindingDB" id="P16659"/>
<dbReference type="ChEMBL" id="CHEMBL5169225"/>
<dbReference type="CarbonylDB" id="P16659"/>
<dbReference type="jPOST" id="P16659"/>
<dbReference type="PaxDb" id="511145-b0194"/>
<dbReference type="EnsemblBacteria" id="AAC73305">
    <property type="protein sequence ID" value="AAC73305"/>
    <property type="gene ID" value="b0194"/>
</dbReference>
<dbReference type="GeneID" id="949116"/>
<dbReference type="KEGG" id="ecj:JW0190"/>
<dbReference type="KEGG" id="eco:b0194"/>
<dbReference type="KEGG" id="ecoc:C3026_00900"/>
<dbReference type="PATRIC" id="fig|1411691.4.peg.2084"/>
<dbReference type="EchoBASE" id="EB0763"/>
<dbReference type="eggNOG" id="COG0442">
    <property type="taxonomic scope" value="Bacteria"/>
</dbReference>
<dbReference type="HOGENOM" id="CLU_016739_0_0_6"/>
<dbReference type="InParanoid" id="P16659"/>
<dbReference type="OMA" id="NCDYAAN"/>
<dbReference type="OrthoDB" id="9809052at2"/>
<dbReference type="PhylomeDB" id="P16659"/>
<dbReference type="BioCyc" id="EcoCyc:PROS-MONOMER"/>
<dbReference type="BioCyc" id="MetaCyc:PROS-MONOMER"/>
<dbReference type="BRENDA" id="6.1.1.15">
    <property type="organism ID" value="2026"/>
</dbReference>
<dbReference type="SABIO-RK" id="P16659"/>
<dbReference type="PRO" id="PR:P16659"/>
<dbReference type="Proteomes" id="UP000000625">
    <property type="component" value="Chromosome"/>
</dbReference>
<dbReference type="GO" id="GO:0005829">
    <property type="term" value="C:cytosol"/>
    <property type="evidence" value="ECO:0000314"/>
    <property type="project" value="EcoCyc"/>
</dbReference>
<dbReference type="GO" id="GO:0043906">
    <property type="term" value="F:Ala-tRNA(Pro) deacylase activity"/>
    <property type="evidence" value="ECO:0000314"/>
    <property type="project" value="UniProtKB"/>
</dbReference>
<dbReference type="GO" id="GO:0005524">
    <property type="term" value="F:ATP binding"/>
    <property type="evidence" value="ECO:0007669"/>
    <property type="project" value="UniProtKB-UniRule"/>
</dbReference>
<dbReference type="GO" id="GO:0004827">
    <property type="term" value="F:proline-tRNA ligase activity"/>
    <property type="evidence" value="ECO:0000314"/>
    <property type="project" value="EcoCyc"/>
</dbReference>
<dbReference type="GO" id="GO:0106074">
    <property type="term" value="P:aminoacyl-tRNA metabolism involved in translational fidelity"/>
    <property type="evidence" value="ECO:0000315"/>
    <property type="project" value="EcoCyc"/>
</dbReference>
<dbReference type="GO" id="GO:0006433">
    <property type="term" value="P:prolyl-tRNA aminoacylation"/>
    <property type="evidence" value="ECO:0000315"/>
    <property type="project" value="EcoCyc"/>
</dbReference>
<dbReference type="CDD" id="cd04334">
    <property type="entry name" value="ProRS-INS"/>
    <property type="match status" value="1"/>
</dbReference>
<dbReference type="CDD" id="cd00861">
    <property type="entry name" value="ProRS_anticodon_short"/>
    <property type="match status" value="1"/>
</dbReference>
<dbReference type="CDD" id="cd00779">
    <property type="entry name" value="ProRS_core_prok"/>
    <property type="match status" value="1"/>
</dbReference>
<dbReference type="FunFam" id="3.30.930.10:FF:000012">
    <property type="entry name" value="Proline--tRNA ligase"/>
    <property type="match status" value="1"/>
</dbReference>
<dbReference type="FunFam" id="3.30.930.10:FF:000097">
    <property type="entry name" value="Proline--tRNA ligase"/>
    <property type="match status" value="1"/>
</dbReference>
<dbReference type="FunFam" id="3.40.50.800:FF:000006">
    <property type="entry name" value="Proline--tRNA ligase"/>
    <property type="match status" value="1"/>
</dbReference>
<dbReference type="FunFam" id="3.90.960.10:FF:000001">
    <property type="entry name" value="Proline--tRNA ligase"/>
    <property type="match status" value="1"/>
</dbReference>
<dbReference type="Gene3D" id="3.40.50.800">
    <property type="entry name" value="Anticodon-binding domain"/>
    <property type="match status" value="1"/>
</dbReference>
<dbReference type="Gene3D" id="3.30.930.10">
    <property type="entry name" value="Bira Bifunctional Protein, Domain 2"/>
    <property type="match status" value="2"/>
</dbReference>
<dbReference type="Gene3D" id="3.90.960.10">
    <property type="entry name" value="YbaK/aminoacyl-tRNA synthetase-associated domain"/>
    <property type="match status" value="1"/>
</dbReference>
<dbReference type="HAMAP" id="MF_01569">
    <property type="entry name" value="Pro_tRNA_synth_type1"/>
    <property type="match status" value="1"/>
</dbReference>
<dbReference type="InterPro" id="IPR002314">
    <property type="entry name" value="aa-tRNA-synt_IIb"/>
</dbReference>
<dbReference type="InterPro" id="IPR006195">
    <property type="entry name" value="aa-tRNA-synth_II"/>
</dbReference>
<dbReference type="InterPro" id="IPR045864">
    <property type="entry name" value="aa-tRNA-synth_II/BPL/LPL"/>
</dbReference>
<dbReference type="InterPro" id="IPR004154">
    <property type="entry name" value="Anticodon-bd"/>
</dbReference>
<dbReference type="InterPro" id="IPR036621">
    <property type="entry name" value="Anticodon-bd_dom_sf"/>
</dbReference>
<dbReference type="InterPro" id="IPR002316">
    <property type="entry name" value="Pro-tRNA-ligase_IIa"/>
</dbReference>
<dbReference type="InterPro" id="IPR004500">
    <property type="entry name" value="Pro-tRNA-synth_IIa_bac-type"/>
</dbReference>
<dbReference type="InterPro" id="IPR023717">
    <property type="entry name" value="Pro-tRNA-Synthase_IIa_type1"/>
</dbReference>
<dbReference type="InterPro" id="IPR050062">
    <property type="entry name" value="Pro-tRNA_synthetase"/>
</dbReference>
<dbReference type="InterPro" id="IPR044140">
    <property type="entry name" value="ProRS_anticodon_short"/>
</dbReference>
<dbReference type="InterPro" id="IPR033730">
    <property type="entry name" value="ProRS_core_prok"/>
</dbReference>
<dbReference type="InterPro" id="IPR036754">
    <property type="entry name" value="YbaK/aa-tRNA-synt-asso_dom_sf"/>
</dbReference>
<dbReference type="InterPro" id="IPR007214">
    <property type="entry name" value="YbaK/aa-tRNA-synth-assoc-dom"/>
</dbReference>
<dbReference type="NCBIfam" id="NF006625">
    <property type="entry name" value="PRK09194.1"/>
    <property type="match status" value="1"/>
</dbReference>
<dbReference type="NCBIfam" id="TIGR00409">
    <property type="entry name" value="proS_fam_II"/>
    <property type="match status" value="1"/>
</dbReference>
<dbReference type="PANTHER" id="PTHR42753">
    <property type="entry name" value="MITOCHONDRIAL RIBOSOME PROTEIN L39/PROLYL-TRNA LIGASE FAMILY MEMBER"/>
    <property type="match status" value="1"/>
</dbReference>
<dbReference type="PANTHER" id="PTHR42753:SF2">
    <property type="entry name" value="PROLINE--TRNA LIGASE"/>
    <property type="match status" value="1"/>
</dbReference>
<dbReference type="Pfam" id="PF03129">
    <property type="entry name" value="HGTP_anticodon"/>
    <property type="match status" value="1"/>
</dbReference>
<dbReference type="Pfam" id="PF00587">
    <property type="entry name" value="tRNA-synt_2b"/>
    <property type="match status" value="1"/>
</dbReference>
<dbReference type="Pfam" id="PF04073">
    <property type="entry name" value="tRNA_edit"/>
    <property type="match status" value="1"/>
</dbReference>
<dbReference type="PIRSF" id="PIRSF001535">
    <property type="entry name" value="ProRS_1"/>
    <property type="match status" value="1"/>
</dbReference>
<dbReference type="PRINTS" id="PR01046">
    <property type="entry name" value="TRNASYNTHPRO"/>
</dbReference>
<dbReference type="SUPFAM" id="SSF52954">
    <property type="entry name" value="Class II aaRS ABD-related"/>
    <property type="match status" value="1"/>
</dbReference>
<dbReference type="SUPFAM" id="SSF55681">
    <property type="entry name" value="Class II aaRS and biotin synthetases"/>
    <property type="match status" value="1"/>
</dbReference>
<dbReference type="SUPFAM" id="SSF55826">
    <property type="entry name" value="YbaK/ProRS associated domain"/>
    <property type="match status" value="1"/>
</dbReference>
<dbReference type="PROSITE" id="PS50862">
    <property type="entry name" value="AA_TRNA_LIGASE_II"/>
    <property type="match status" value="1"/>
</dbReference>
<keyword id="KW-0030">Aminoacyl-tRNA synthetase</keyword>
<keyword id="KW-0067">ATP-binding</keyword>
<keyword id="KW-0963">Cytoplasm</keyword>
<keyword id="KW-0903">Direct protein sequencing</keyword>
<keyword id="KW-0436">Ligase</keyword>
<keyword id="KW-0547">Nucleotide-binding</keyword>
<keyword id="KW-0648">Protein biosynthesis</keyword>
<keyword id="KW-1185">Reference proteome</keyword>
<protein>
    <recommendedName>
        <fullName>Proline--tRNA ligase</fullName>
        <ecNumber>6.1.1.15</ecNumber>
    </recommendedName>
    <alternativeName>
        <fullName>Global RNA synthesis factor</fullName>
    </alternativeName>
    <alternativeName>
        <fullName>Prolyl-tRNA synthetase</fullName>
        <shortName>ProRS</shortName>
    </alternativeName>
</protein>